<feature type="chain" id="PRO_0000253059" description="Protein msa">
    <location>
        <begin position="1"/>
        <end position="133"/>
    </location>
</feature>
<feature type="transmembrane region" description="Helical" evidence="2">
    <location>
        <begin position="3"/>
        <end position="23"/>
    </location>
</feature>
<feature type="transmembrane region" description="Helical" evidence="2">
    <location>
        <begin position="27"/>
        <end position="47"/>
    </location>
</feature>
<feature type="transmembrane region" description="Helical" evidence="2">
    <location>
        <begin position="55"/>
        <end position="75"/>
    </location>
</feature>
<feature type="transmembrane region" description="Helical" evidence="2">
    <location>
        <begin position="103"/>
        <end position="123"/>
    </location>
</feature>
<accession>Q99U85</accession>
<protein>
    <recommendedName>
        <fullName>Protein msa</fullName>
    </recommendedName>
    <alternativeName>
        <fullName>Modulator of SarA</fullName>
    </alternativeName>
</protein>
<evidence type="ECO:0000250" key="1"/>
<evidence type="ECO:0000255" key="2"/>
<evidence type="ECO:0000305" key="3"/>
<name>MSA_STAAM</name>
<reference key="1">
    <citation type="journal article" date="2001" name="Lancet">
        <title>Whole genome sequencing of meticillin-resistant Staphylococcus aureus.</title>
        <authorList>
            <person name="Kuroda M."/>
            <person name="Ohta T."/>
            <person name="Uchiyama I."/>
            <person name="Baba T."/>
            <person name="Yuzawa H."/>
            <person name="Kobayashi I."/>
            <person name="Cui L."/>
            <person name="Oguchi A."/>
            <person name="Aoki K."/>
            <person name="Nagai Y."/>
            <person name="Lian J.-Q."/>
            <person name="Ito T."/>
            <person name="Kanamori M."/>
            <person name="Matsumaru H."/>
            <person name="Maruyama A."/>
            <person name="Murakami H."/>
            <person name="Hosoyama A."/>
            <person name="Mizutani-Ui Y."/>
            <person name="Takahashi N.K."/>
            <person name="Sawano T."/>
            <person name="Inoue R."/>
            <person name="Kaito C."/>
            <person name="Sekimizu K."/>
            <person name="Hirakawa H."/>
            <person name="Kuhara S."/>
            <person name="Goto S."/>
            <person name="Yabuzaki J."/>
            <person name="Kanehisa M."/>
            <person name="Yamashita A."/>
            <person name="Oshima K."/>
            <person name="Furuya K."/>
            <person name="Yoshino C."/>
            <person name="Shiba T."/>
            <person name="Hattori M."/>
            <person name="Ogasawara N."/>
            <person name="Hayashi H."/>
            <person name="Hiramatsu K."/>
        </authorList>
    </citation>
    <scope>NUCLEOTIDE SEQUENCE [LARGE SCALE GENOMIC DNA]</scope>
    <source>
        <strain>Mu50 / ATCC 700699</strain>
    </source>
</reference>
<comment type="function">
    <text evidence="1">Accessory element involved in the expression of sarA and several virulence factors. Modulates SarA production and/or function in a strain-dependent manner. Affects the transcription of the accessory gene regulator (agr) and genes encoding virulence factors including alpha toxin (hla) and protein A (spa) (By similarity).</text>
</comment>
<comment type="subcellular location">
    <subcellularLocation>
        <location evidence="3">Cell membrane</location>
        <topology evidence="3">Multi-pass membrane protein</topology>
    </subcellularLocation>
</comment>
<proteinExistence type="inferred from homology"/>
<sequence>MKYLILSLVANLLVFGVLSAIGLNINILAAMMIVLVIPIMISGILFFKTNIDKTYIFFNIIFIDFYYYIYNVHLMTLPKFNNYIKAEMMELEDIDVLITSKDFGFDEILFYTLYLLLILIVLYYLKKQVKHKI</sequence>
<organism>
    <name type="scientific">Staphylococcus aureus (strain Mu50 / ATCC 700699)</name>
    <dbReference type="NCBI Taxonomy" id="158878"/>
    <lineage>
        <taxon>Bacteria</taxon>
        <taxon>Bacillati</taxon>
        <taxon>Bacillota</taxon>
        <taxon>Bacilli</taxon>
        <taxon>Bacillales</taxon>
        <taxon>Staphylococcaceae</taxon>
        <taxon>Staphylococcus</taxon>
    </lineage>
</organism>
<keyword id="KW-1003">Cell membrane</keyword>
<keyword id="KW-0472">Membrane</keyword>
<keyword id="KW-0812">Transmembrane</keyword>
<keyword id="KW-1133">Transmembrane helix</keyword>
<dbReference type="EMBL" id="BA000017">
    <property type="protein sequence ID" value="BAB57563.1"/>
    <property type="molecule type" value="Genomic_DNA"/>
</dbReference>
<dbReference type="RefSeq" id="WP_000876201.1">
    <property type="nucleotide sequence ID" value="NC_002758.2"/>
</dbReference>
<dbReference type="SMR" id="Q99U85"/>
<dbReference type="KEGG" id="sav:SAV1401"/>
<dbReference type="HOGENOM" id="CLU_157294_0_0_9"/>
<dbReference type="Proteomes" id="UP000002481">
    <property type="component" value="Chromosome"/>
</dbReference>
<dbReference type="GO" id="GO:0005886">
    <property type="term" value="C:plasma membrane"/>
    <property type="evidence" value="ECO:0007669"/>
    <property type="project" value="UniProtKB-SubCell"/>
</dbReference>
<dbReference type="NCBIfam" id="NF038270">
    <property type="entry name" value="membran_MsaC"/>
    <property type="match status" value="1"/>
</dbReference>
<gene>
    <name type="primary">msa</name>
    <name type="ordered locus">SAV1401</name>
</gene>